<reference key="1">
    <citation type="journal article" date="2007" name="ISME J.">
        <title>Population level functional diversity in a microbial community revealed by comparative genomic and metagenomic analyses.</title>
        <authorList>
            <person name="Bhaya D."/>
            <person name="Grossman A.R."/>
            <person name="Steunou A.-S."/>
            <person name="Khuri N."/>
            <person name="Cohan F.M."/>
            <person name="Hamamura N."/>
            <person name="Melendrez M.C."/>
            <person name="Bateson M.M."/>
            <person name="Ward D.M."/>
            <person name="Heidelberg J.F."/>
        </authorList>
    </citation>
    <scope>NUCLEOTIDE SEQUENCE [LARGE SCALE GENOMIC DNA]</scope>
    <source>
        <strain>JA-2-3B'a(2-13)</strain>
    </source>
</reference>
<accession>Q2JMA8</accession>
<organism>
    <name type="scientific">Synechococcus sp. (strain JA-2-3B'a(2-13))</name>
    <name type="common">Cyanobacteria bacterium Yellowstone B-Prime</name>
    <dbReference type="NCBI Taxonomy" id="321332"/>
    <lineage>
        <taxon>Bacteria</taxon>
        <taxon>Bacillati</taxon>
        <taxon>Cyanobacteriota</taxon>
        <taxon>Cyanophyceae</taxon>
        <taxon>Synechococcales</taxon>
        <taxon>Synechococcaceae</taxon>
        <taxon>Synechococcus</taxon>
    </lineage>
</organism>
<name>SYDND_SYNJB</name>
<feature type="chain" id="PRO_0000235568" description="Aspartate--tRNA(Asp/Asn) ligase">
    <location>
        <begin position="1"/>
        <end position="601"/>
    </location>
</feature>
<feature type="region of interest" description="Aspartate" evidence="1">
    <location>
        <begin position="210"/>
        <end position="213"/>
    </location>
</feature>
<feature type="binding site" evidence="1">
    <location>
        <position position="186"/>
    </location>
    <ligand>
        <name>L-aspartate</name>
        <dbReference type="ChEBI" id="CHEBI:29991"/>
    </ligand>
</feature>
<feature type="binding site" evidence="1">
    <location>
        <begin position="232"/>
        <end position="234"/>
    </location>
    <ligand>
        <name>ATP</name>
        <dbReference type="ChEBI" id="CHEBI:30616"/>
    </ligand>
</feature>
<feature type="binding site" evidence="1">
    <location>
        <position position="232"/>
    </location>
    <ligand>
        <name>L-aspartate</name>
        <dbReference type="ChEBI" id="CHEBI:29991"/>
    </ligand>
</feature>
<feature type="binding site" evidence="1">
    <location>
        <position position="241"/>
    </location>
    <ligand>
        <name>ATP</name>
        <dbReference type="ChEBI" id="CHEBI:30616"/>
    </ligand>
</feature>
<feature type="binding site" evidence="1">
    <location>
        <position position="465"/>
    </location>
    <ligand>
        <name>L-aspartate</name>
        <dbReference type="ChEBI" id="CHEBI:29991"/>
    </ligand>
</feature>
<feature type="binding site" evidence="1">
    <location>
        <position position="495"/>
    </location>
    <ligand>
        <name>ATP</name>
        <dbReference type="ChEBI" id="CHEBI:30616"/>
    </ligand>
</feature>
<feature type="binding site" evidence="1">
    <location>
        <position position="502"/>
    </location>
    <ligand>
        <name>L-aspartate</name>
        <dbReference type="ChEBI" id="CHEBI:29991"/>
    </ligand>
</feature>
<feature type="binding site" evidence="1">
    <location>
        <begin position="547"/>
        <end position="550"/>
    </location>
    <ligand>
        <name>ATP</name>
        <dbReference type="ChEBI" id="CHEBI:30616"/>
    </ligand>
</feature>
<feature type="site" description="Important for tRNA non-discrimination" evidence="1">
    <location>
        <position position="38"/>
    </location>
</feature>
<dbReference type="EC" id="6.1.1.23" evidence="1"/>
<dbReference type="EMBL" id="CP000240">
    <property type="protein sequence ID" value="ABD02136.1"/>
    <property type="molecule type" value="Genomic_DNA"/>
</dbReference>
<dbReference type="RefSeq" id="WP_011432789.1">
    <property type="nucleotide sequence ID" value="NC_007776.1"/>
</dbReference>
<dbReference type="SMR" id="Q2JMA8"/>
<dbReference type="STRING" id="321332.CYB_1161"/>
<dbReference type="KEGG" id="cyb:CYB_1161"/>
<dbReference type="eggNOG" id="COG0173">
    <property type="taxonomic scope" value="Bacteria"/>
</dbReference>
<dbReference type="HOGENOM" id="CLU_014330_3_2_3"/>
<dbReference type="OrthoDB" id="9802326at2"/>
<dbReference type="Proteomes" id="UP000001938">
    <property type="component" value="Chromosome"/>
</dbReference>
<dbReference type="GO" id="GO:0005737">
    <property type="term" value="C:cytoplasm"/>
    <property type="evidence" value="ECO:0007669"/>
    <property type="project" value="UniProtKB-SubCell"/>
</dbReference>
<dbReference type="GO" id="GO:0004815">
    <property type="term" value="F:aspartate-tRNA ligase activity"/>
    <property type="evidence" value="ECO:0007669"/>
    <property type="project" value="UniProtKB-UniRule"/>
</dbReference>
<dbReference type="GO" id="GO:0050560">
    <property type="term" value="F:aspartate-tRNA(Asn) ligase activity"/>
    <property type="evidence" value="ECO:0007669"/>
    <property type="project" value="UniProtKB-EC"/>
</dbReference>
<dbReference type="GO" id="GO:0005524">
    <property type="term" value="F:ATP binding"/>
    <property type="evidence" value="ECO:0007669"/>
    <property type="project" value="UniProtKB-UniRule"/>
</dbReference>
<dbReference type="GO" id="GO:0003676">
    <property type="term" value="F:nucleic acid binding"/>
    <property type="evidence" value="ECO:0007669"/>
    <property type="project" value="InterPro"/>
</dbReference>
<dbReference type="GO" id="GO:0006422">
    <property type="term" value="P:aspartyl-tRNA aminoacylation"/>
    <property type="evidence" value="ECO:0007669"/>
    <property type="project" value="UniProtKB-UniRule"/>
</dbReference>
<dbReference type="CDD" id="cd00777">
    <property type="entry name" value="AspRS_core"/>
    <property type="match status" value="1"/>
</dbReference>
<dbReference type="CDD" id="cd04317">
    <property type="entry name" value="EcAspRS_like_N"/>
    <property type="match status" value="1"/>
</dbReference>
<dbReference type="Gene3D" id="3.30.930.10">
    <property type="entry name" value="Bira Bifunctional Protein, Domain 2"/>
    <property type="match status" value="1"/>
</dbReference>
<dbReference type="Gene3D" id="3.30.1360.30">
    <property type="entry name" value="GAD-like domain"/>
    <property type="match status" value="1"/>
</dbReference>
<dbReference type="Gene3D" id="2.40.50.140">
    <property type="entry name" value="Nucleic acid-binding proteins"/>
    <property type="match status" value="1"/>
</dbReference>
<dbReference type="HAMAP" id="MF_00044">
    <property type="entry name" value="Asp_tRNA_synth_type1"/>
    <property type="match status" value="1"/>
</dbReference>
<dbReference type="InterPro" id="IPR004364">
    <property type="entry name" value="Aa-tRNA-synt_II"/>
</dbReference>
<dbReference type="InterPro" id="IPR006195">
    <property type="entry name" value="aa-tRNA-synth_II"/>
</dbReference>
<dbReference type="InterPro" id="IPR045864">
    <property type="entry name" value="aa-tRNA-synth_II/BPL/LPL"/>
</dbReference>
<dbReference type="InterPro" id="IPR004524">
    <property type="entry name" value="Asp-tRNA-ligase_1"/>
</dbReference>
<dbReference type="InterPro" id="IPR047089">
    <property type="entry name" value="Asp-tRNA-ligase_1_N"/>
</dbReference>
<dbReference type="InterPro" id="IPR002312">
    <property type="entry name" value="Asp/Asn-tRNA-synth_IIb"/>
</dbReference>
<dbReference type="InterPro" id="IPR047090">
    <property type="entry name" value="AspRS_core"/>
</dbReference>
<dbReference type="InterPro" id="IPR004115">
    <property type="entry name" value="GAD-like_sf"/>
</dbReference>
<dbReference type="InterPro" id="IPR029351">
    <property type="entry name" value="GAD_dom"/>
</dbReference>
<dbReference type="InterPro" id="IPR012340">
    <property type="entry name" value="NA-bd_OB-fold"/>
</dbReference>
<dbReference type="InterPro" id="IPR004365">
    <property type="entry name" value="NA-bd_OB_tRNA"/>
</dbReference>
<dbReference type="NCBIfam" id="TIGR00459">
    <property type="entry name" value="aspS_bact"/>
    <property type="match status" value="1"/>
</dbReference>
<dbReference type="NCBIfam" id="NF001750">
    <property type="entry name" value="PRK00476.1"/>
    <property type="match status" value="1"/>
</dbReference>
<dbReference type="PANTHER" id="PTHR22594:SF5">
    <property type="entry name" value="ASPARTATE--TRNA LIGASE, MITOCHONDRIAL"/>
    <property type="match status" value="1"/>
</dbReference>
<dbReference type="PANTHER" id="PTHR22594">
    <property type="entry name" value="ASPARTYL/LYSYL-TRNA SYNTHETASE"/>
    <property type="match status" value="1"/>
</dbReference>
<dbReference type="Pfam" id="PF02938">
    <property type="entry name" value="GAD"/>
    <property type="match status" value="1"/>
</dbReference>
<dbReference type="Pfam" id="PF00152">
    <property type="entry name" value="tRNA-synt_2"/>
    <property type="match status" value="1"/>
</dbReference>
<dbReference type="Pfam" id="PF01336">
    <property type="entry name" value="tRNA_anti-codon"/>
    <property type="match status" value="1"/>
</dbReference>
<dbReference type="PRINTS" id="PR01042">
    <property type="entry name" value="TRNASYNTHASP"/>
</dbReference>
<dbReference type="SUPFAM" id="SSF55681">
    <property type="entry name" value="Class II aaRS and biotin synthetases"/>
    <property type="match status" value="1"/>
</dbReference>
<dbReference type="SUPFAM" id="SSF55261">
    <property type="entry name" value="GAD domain-like"/>
    <property type="match status" value="1"/>
</dbReference>
<dbReference type="SUPFAM" id="SSF50249">
    <property type="entry name" value="Nucleic acid-binding proteins"/>
    <property type="match status" value="1"/>
</dbReference>
<dbReference type="PROSITE" id="PS50862">
    <property type="entry name" value="AA_TRNA_LIGASE_II"/>
    <property type="match status" value="1"/>
</dbReference>
<proteinExistence type="inferred from homology"/>
<keyword id="KW-0030">Aminoacyl-tRNA synthetase</keyword>
<keyword id="KW-0067">ATP-binding</keyword>
<keyword id="KW-0963">Cytoplasm</keyword>
<keyword id="KW-0436">Ligase</keyword>
<keyword id="KW-0547">Nucleotide-binding</keyword>
<keyword id="KW-0648">Protein biosynthesis</keyword>
<keyword id="KW-1185">Reference proteome</keyword>
<comment type="function">
    <text evidence="1">Aspartyl-tRNA synthetase with relaxed tRNA specificity since it is able to aspartylate not only its cognate tRNA(Asp) but also tRNA(Asn). Reaction proceeds in two steps: L-aspartate is first activated by ATP to form Asp-AMP and then transferred to the acceptor end of tRNA(Asp/Asn).</text>
</comment>
<comment type="catalytic activity">
    <reaction evidence="1">
        <text>tRNA(Asx) + L-aspartate + ATP = L-aspartyl-tRNA(Asx) + AMP + diphosphate</text>
        <dbReference type="Rhea" id="RHEA:18349"/>
        <dbReference type="Rhea" id="RHEA-COMP:9710"/>
        <dbReference type="Rhea" id="RHEA-COMP:9711"/>
        <dbReference type="ChEBI" id="CHEBI:29991"/>
        <dbReference type="ChEBI" id="CHEBI:30616"/>
        <dbReference type="ChEBI" id="CHEBI:33019"/>
        <dbReference type="ChEBI" id="CHEBI:78442"/>
        <dbReference type="ChEBI" id="CHEBI:78516"/>
        <dbReference type="ChEBI" id="CHEBI:456215"/>
        <dbReference type="EC" id="6.1.1.23"/>
    </reaction>
</comment>
<comment type="subunit">
    <text evidence="1">Homodimer.</text>
</comment>
<comment type="subcellular location">
    <subcellularLocation>
        <location evidence="1">Cytoplasm</location>
    </subcellularLocation>
</comment>
<comment type="similarity">
    <text evidence="1">Belongs to the class-II aminoacyl-tRNA synthetase family. Type 1 subfamily.</text>
</comment>
<evidence type="ECO:0000255" key="1">
    <source>
        <dbReference type="HAMAP-Rule" id="MF_00044"/>
    </source>
</evidence>
<gene>
    <name evidence="1" type="primary">aspS</name>
    <name type="ordered locus">CYB_1161</name>
</gene>
<sequence>MPAAIHRPARTLYCGEVRPAHIGQTVTLYGWIDRRRDHGGVIFLDLRDRSGIVQLVADPQKTPQSYPLAGEVRNEYVVRVTGTVQQRPPDSFNPRLATGEVEIYAEQLEVLSPVGKQLPFSVSGEEAEEVREEIRLRYRYLDLRRERMSRNLQLRHRVIQAIRRFLEDEEGFVEVETPILTRSTPEGARDYLVPSRVNPGEWFALPQSPQLFKQLLMVAGVDRYYQIARCFRDEDLRADRQPEFTQLDMEMSFMDQEGILELNERLICHIFKTVKGIHLPRPFPRLTYAEAMARYGSDKPDTRFGMELVDVSEVFQGSRFKVFAKVLAEGGLIKILPVPGGDEKISNTRIKPGGDLFKLVTQYGAGGLAFIRVRPDSLDTIGALKESLSPEQEKRLLDLTQAKPGDLLLFGAGPAAVVNESLGRLRLHLGQELGLIPENALNLLWITDFPMFEFNAEENRLEALHHPFTAPHPDDLADLKTARAQAYDLVWNGVEVGGGSLRIYQREIQEQVFQAIGLTPEQARDKFGFLLEAFEYGTPPHGGIAYGLDRLVMLLAGEDSIRDVIAFPKTQQARCLLTGAPSSVEAKQLKELHVASTYQPG</sequence>
<protein>
    <recommendedName>
        <fullName evidence="1">Aspartate--tRNA(Asp/Asn) ligase</fullName>
        <ecNumber evidence="1">6.1.1.23</ecNumber>
    </recommendedName>
    <alternativeName>
        <fullName evidence="1">Aspartyl-tRNA synthetase</fullName>
        <shortName evidence="1">AspRS</shortName>
    </alternativeName>
    <alternativeName>
        <fullName evidence="1">Non-discriminating aspartyl-tRNA synthetase</fullName>
        <shortName evidence="1">ND-AspRS</shortName>
    </alternativeName>
</protein>